<gene>
    <name evidence="1" type="primary">rpmH</name>
    <name type="ordered locus">M28_Spy0205</name>
</gene>
<evidence type="ECO:0000255" key="1">
    <source>
        <dbReference type="HAMAP-Rule" id="MF_00391"/>
    </source>
</evidence>
<evidence type="ECO:0000256" key="2">
    <source>
        <dbReference type="SAM" id="MobiDB-lite"/>
    </source>
</evidence>
<evidence type="ECO:0000305" key="3"/>
<accession>Q48VD7</accession>
<name>RL34_STRPM</name>
<organism>
    <name type="scientific">Streptococcus pyogenes serotype M28 (strain MGAS6180)</name>
    <dbReference type="NCBI Taxonomy" id="319701"/>
    <lineage>
        <taxon>Bacteria</taxon>
        <taxon>Bacillati</taxon>
        <taxon>Bacillota</taxon>
        <taxon>Bacilli</taxon>
        <taxon>Lactobacillales</taxon>
        <taxon>Streptococcaceae</taxon>
        <taxon>Streptococcus</taxon>
    </lineage>
</organism>
<protein>
    <recommendedName>
        <fullName evidence="1">Large ribosomal subunit protein bL34</fullName>
    </recommendedName>
    <alternativeName>
        <fullName evidence="3">50S ribosomal protein L34</fullName>
    </alternativeName>
</protein>
<proteinExistence type="inferred from homology"/>
<dbReference type="EMBL" id="CP000056">
    <property type="protein sequence ID" value="AAX71319.1"/>
    <property type="molecule type" value="Genomic_DNA"/>
</dbReference>
<dbReference type="RefSeq" id="WP_002885866.1">
    <property type="nucleotide sequence ID" value="NC_007296.2"/>
</dbReference>
<dbReference type="SMR" id="Q48VD7"/>
<dbReference type="GeneID" id="93923177"/>
<dbReference type="KEGG" id="spb:M28_Spy0205"/>
<dbReference type="HOGENOM" id="CLU_129938_2_0_9"/>
<dbReference type="GO" id="GO:1990904">
    <property type="term" value="C:ribonucleoprotein complex"/>
    <property type="evidence" value="ECO:0007669"/>
    <property type="project" value="UniProtKB-KW"/>
</dbReference>
<dbReference type="GO" id="GO:0005840">
    <property type="term" value="C:ribosome"/>
    <property type="evidence" value="ECO:0007669"/>
    <property type="project" value="UniProtKB-KW"/>
</dbReference>
<dbReference type="GO" id="GO:0003735">
    <property type="term" value="F:structural constituent of ribosome"/>
    <property type="evidence" value="ECO:0007669"/>
    <property type="project" value="InterPro"/>
</dbReference>
<dbReference type="GO" id="GO:0006412">
    <property type="term" value="P:translation"/>
    <property type="evidence" value="ECO:0007669"/>
    <property type="project" value="UniProtKB-UniRule"/>
</dbReference>
<dbReference type="FunFam" id="1.10.287.3980:FF:000001">
    <property type="entry name" value="Mitochondrial ribosomal protein L34"/>
    <property type="match status" value="1"/>
</dbReference>
<dbReference type="Gene3D" id="1.10.287.3980">
    <property type="match status" value="1"/>
</dbReference>
<dbReference type="HAMAP" id="MF_00391">
    <property type="entry name" value="Ribosomal_bL34"/>
    <property type="match status" value="1"/>
</dbReference>
<dbReference type="InterPro" id="IPR000271">
    <property type="entry name" value="Ribosomal_bL34"/>
</dbReference>
<dbReference type="InterPro" id="IPR020939">
    <property type="entry name" value="Ribosomal_bL34_CS"/>
</dbReference>
<dbReference type="NCBIfam" id="TIGR01030">
    <property type="entry name" value="rpmH_bact"/>
    <property type="match status" value="1"/>
</dbReference>
<dbReference type="PANTHER" id="PTHR14503:SF4">
    <property type="entry name" value="LARGE RIBOSOMAL SUBUNIT PROTEIN BL34M"/>
    <property type="match status" value="1"/>
</dbReference>
<dbReference type="PANTHER" id="PTHR14503">
    <property type="entry name" value="MITOCHONDRIAL RIBOSOMAL PROTEIN 34 FAMILY MEMBER"/>
    <property type="match status" value="1"/>
</dbReference>
<dbReference type="Pfam" id="PF00468">
    <property type="entry name" value="Ribosomal_L34"/>
    <property type="match status" value="1"/>
</dbReference>
<dbReference type="PROSITE" id="PS00784">
    <property type="entry name" value="RIBOSOMAL_L34"/>
    <property type="match status" value="1"/>
</dbReference>
<keyword id="KW-0687">Ribonucleoprotein</keyword>
<keyword id="KW-0689">Ribosomal protein</keyword>
<sequence length="44" mass="5361">MKRTYQPSKIRRQRKHGFRHRMSTKNGRRVLAARRRKGRKVLSA</sequence>
<comment type="similarity">
    <text evidence="1">Belongs to the bacterial ribosomal protein bL34 family.</text>
</comment>
<reference key="1">
    <citation type="journal article" date="2005" name="J. Infect. Dis.">
        <title>Genome sequence of a serotype M28 strain of group A Streptococcus: potential new insights into puerperal sepsis and bacterial disease specificity.</title>
        <authorList>
            <person name="Green N.M."/>
            <person name="Zhang S."/>
            <person name="Porcella S.F."/>
            <person name="Nagiec M.J."/>
            <person name="Barbian K.D."/>
            <person name="Beres S.B."/>
            <person name="Lefebvre R.B."/>
            <person name="Musser J.M."/>
        </authorList>
    </citation>
    <scope>NUCLEOTIDE SEQUENCE [LARGE SCALE GENOMIC DNA]</scope>
    <source>
        <strain>MGAS6180</strain>
    </source>
</reference>
<feature type="chain" id="PRO_1000013468" description="Large ribosomal subunit protein bL34">
    <location>
        <begin position="1"/>
        <end position="44"/>
    </location>
</feature>
<feature type="region of interest" description="Disordered" evidence="2">
    <location>
        <begin position="1"/>
        <end position="44"/>
    </location>
</feature>